<comment type="function">
    <text evidence="2">Seed storage protein. Serves as a source of nitrogen, carbon, and sulfur for the young developing seedling (By similarity).</text>
</comment>
<comment type="subunit">
    <text evidence="2">Monomer.</text>
</comment>
<comment type="subcellular location">
    <subcellularLocation>
        <location evidence="1">Vacuole</location>
        <location evidence="1">Aleurone grain</location>
    </subcellularLocation>
    <text evidence="1">Protein bodies inside vacuoles.</text>
</comment>
<comment type="allergen">
    <text evidence="1">Causes an allergic reaction in human. Avenins are one of the causes of celiac disease, also known as celiac sprue or gluten-sensitive enteropathy (By similarity).</text>
</comment>
<comment type="similarity">
    <text evidence="3">Belongs to the gliadin/glutenin family.</text>
</comment>
<feature type="chain" id="PRO_0000239308" description="Avenin-A">
    <location>
        <begin position="1" status="less than"/>
        <end position="36" status="greater than"/>
    </location>
</feature>
<feature type="non-terminal residue" evidence="6">
    <location>
        <position position="1"/>
    </location>
</feature>
<feature type="non-terminal residue" evidence="6">
    <location>
        <position position="36"/>
    </location>
</feature>
<sequence length="36" mass="4393">PSEQYQPYPEQQQPFLQQQPLELQQQQXXLVLFLQK</sequence>
<evidence type="ECO:0000250" key="1"/>
<evidence type="ECO:0000250" key="2">
    <source>
        <dbReference type="UniProtKB" id="P80356"/>
    </source>
</evidence>
<evidence type="ECO:0000255" key="3"/>
<evidence type="ECO:0000269" key="4">
    <source>
    </source>
</evidence>
<evidence type="ECO:0000269" key="5">
    <source>
    </source>
</evidence>
<evidence type="ECO:0000303" key="6">
    <source>
    </source>
</evidence>
<evidence type="ECO:0000305" key="7"/>
<evidence type="ECO:0000312" key="8">
    <source>
        <dbReference type="PIR" id="S29207"/>
    </source>
</evidence>
<accession>Q09095</accession>
<keyword id="KW-0020">Allergen</keyword>
<keyword id="KW-0903">Direct protein sequencing</keyword>
<keyword id="KW-0708">Seed storage protein</keyword>
<keyword id="KW-0758">Storage protein</keyword>
<keyword id="KW-0926">Vacuole</keyword>
<reference evidence="7" key="1">
    <citation type="journal article" date="1987" name="Biochimie">
        <title>N-terminal sequences of oat avenins compared to other cereal prolamins.</title>
        <authorList>
            <person name="Pernollet J.-C."/>
            <person name="Huet J.-C."/>
            <person name="Galle A.-M."/>
            <person name="Sallantin M."/>
        </authorList>
    </citation>
    <scope>PROTEIN SEQUENCE</scope>
    <source>
        <strain evidence="5">cv. Rhea</strain>
        <tissue evidence="5">Seed</tissue>
    </source>
</reference>
<reference evidence="7 8" key="2">
    <citation type="journal article" date="1992" name="FEBS Lett.">
        <title>Identification of the three major coeliac immunoreactive proteins and one alpha-amylase inhibitor from oat endosperm.</title>
        <authorList>
            <person name="Rocher A."/>
            <person name="Colilla F."/>
            <person name="Ortiz M.L."/>
            <person name="Mendez E."/>
        </authorList>
    </citation>
    <scope>PROTEIN SEQUENCE OF 1-15</scope>
    <source>
        <tissue evidence="4">Endosperm</tissue>
    </source>
</reference>
<organism>
    <name type="scientific">Avena sativa</name>
    <name type="common">Oat</name>
    <dbReference type="NCBI Taxonomy" id="4498"/>
    <lineage>
        <taxon>Eukaryota</taxon>
        <taxon>Viridiplantae</taxon>
        <taxon>Streptophyta</taxon>
        <taxon>Embryophyta</taxon>
        <taxon>Tracheophyta</taxon>
        <taxon>Spermatophyta</taxon>
        <taxon>Magnoliopsida</taxon>
        <taxon>Liliopsida</taxon>
        <taxon>Poales</taxon>
        <taxon>Poaceae</taxon>
        <taxon>BOP clade</taxon>
        <taxon>Pooideae</taxon>
        <taxon>Poodae</taxon>
        <taxon>Poeae</taxon>
        <taxon>Poeae Chloroplast Group 1 (Aveneae type)</taxon>
        <taxon>Aveninae</taxon>
        <taxon>Avena</taxon>
    </lineage>
</organism>
<proteinExistence type="evidence at protein level"/>
<dbReference type="PIR" id="S29207">
    <property type="entry name" value="S29207"/>
</dbReference>
<dbReference type="GO" id="GO:0033095">
    <property type="term" value="C:aleurone grain"/>
    <property type="evidence" value="ECO:0007669"/>
    <property type="project" value="UniProtKB-SubCell"/>
</dbReference>
<dbReference type="GO" id="GO:0005773">
    <property type="term" value="C:vacuole"/>
    <property type="evidence" value="ECO:0007669"/>
    <property type="project" value="UniProtKB-KW"/>
</dbReference>
<dbReference type="GO" id="GO:0045735">
    <property type="term" value="F:nutrient reservoir activity"/>
    <property type="evidence" value="ECO:0007669"/>
    <property type="project" value="UniProtKB-KW"/>
</dbReference>
<protein>
    <recommendedName>
        <fullName>Avenin-A</fullName>
    </recommendedName>
    <alternativeName>
        <fullName>Celiac immunoreactive protein 1</fullName>
        <shortName>CIP-1</shortName>
    </alternativeName>
    <alternativeName>
        <fullName>Gamma-4 avenin</fullName>
    </alternativeName>
    <alternativeName>
        <fullName>Prolamin</fullName>
    </alternativeName>
</protein>
<name>AVEA_AVESA</name>